<gene>
    <name evidence="1" type="primary">rplM</name>
    <name type="ordered locus">THA_1312</name>
</gene>
<sequence length="149" mass="17128">MARTLPIQKTTLLKKEEVKKDWYLINAEGQTLGRLATRIALVLMGKNKPNWTPHVDCGNFVVVINADKIKLTGKKWDQKIYYRHSGYPGGIKEFTARQLQQRNPEKLIQLAVKRMLPKTILGRKALKRLKIYAGSEHPHSAQKPIELNF</sequence>
<evidence type="ECO:0000255" key="1">
    <source>
        <dbReference type="HAMAP-Rule" id="MF_01366"/>
    </source>
</evidence>
<evidence type="ECO:0000305" key="2"/>
<keyword id="KW-1185">Reference proteome</keyword>
<keyword id="KW-0687">Ribonucleoprotein</keyword>
<keyword id="KW-0689">Ribosomal protein</keyword>
<comment type="function">
    <text evidence="1">This protein is one of the early assembly proteins of the 50S ribosomal subunit, although it is not seen to bind rRNA by itself. It is important during the early stages of 50S assembly.</text>
</comment>
<comment type="subunit">
    <text evidence="1">Part of the 50S ribosomal subunit.</text>
</comment>
<comment type="similarity">
    <text evidence="1">Belongs to the universal ribosomal protein uL13 family.</text>
</comment>
<organism>
    <name type="scientific">Thermosipho africanus (strain TCF52B)</name>
    <dbReference type="NCBI Taxonomy" id="484019"/>
    <lineage>
        <taxon>Bacteria</taxon>
        <taxon>Thermotogati</taxon>
        <taxon>Thermotogota</taxon>
        <taxon>Thermotogae</taxon>
        <taxon>Thermotogales</taxon>
        <taxon>Fervidobacteriaceae</taxon>
        <taxon>Thermosipho</taxon>
    </lineage>
</organism>
<dbReference type="EMBL" id="CP001185">
    <property type="protein sequence ID" value="ACJ75757.1"/>
    <property type="molecule type" value="Genomic_DNA"/>
</dbReference>
<dbReference type="RefSeq" id="WP_012580142.1">
    <property type="nucleotide sequence ID" value="NC_011653.1"/>
</dbReference>
<dbReference type="SMR" id="B7ICN0"/>
<dbReference type="STRING" id="484019.THA_1312"/>
<dbReference type="KEGG" id="taf:THA_1312"/>
<dbReference type="eggNOG" id="COG0102">
    <property type="taxonomic scope" value="Bacteria"/>
</dbReference>
<dbReference type="HOGENOM" id="CLU_082184_2_2_0"/>
<dbReference type="OrthoDB" id="9801330at2"/>
<dbReference type="Proteomes" id="UP000002453">
    <property type="component" value="Chromosome"/>
</dbReference>
<dbReference type="GO" id="GO:0022625">
    <property type="term" value="C:cytosolic large ribosomal subunit"/>
    <property type="evidence" value="ECO:0007669"/>
    <property type="project" value="TreeGrafter"/>
</dbReference>
<dbReference type="GO" id="GO:0003729">
    <property type="term" value="F:mRNA binding"/>
    <property type="evidence" value="ECO:0007669"/>
    <property type="project" value="TreeGrafter"/>
</dbReference>
<dbReference type="GO" id="GO:0003735">
    <property type="term" value="F:structural constituent of ribosome"/>
    <property type="evidence" value="ECO:0007669"/>
    <property type="project" value="InterPro"/>
</dbReference>
<dbReference type="GO" id="GO:0017148">
    <property type="term" value="P:negative regulation of translation"/>
    <property type="evidence" value="ECO:0007669"/>
    <property type="project" value="TreeGrafter"/>
</dbReference>
<dbReference type="GO" id="GO:0006412">
    <property type="term" value="P:translation"/>
    <property type="evidence" value="ECO:0007669"/>
    <property type="project" value="UniProtKB-UniRule"/>
</dbReference>
<dbReference type="CDD" id="cd00392">
    <property type="entry name" value="Ribosomal_L13"/>
    <property type="match status" value="1"/>
</dbReference>
<dbReference type="FunFam" id="3.90.1180.10:FF:000001">
    <property type="entry name" value="50S ribosomal protein L13"/>
    <property type="match status" value="1"/>
</dbReference>
<dbReference type="Gene3D" id="3.90.1180.10">
    <property type="entry name" value="Ribosomal protein L13"/>
    <property type="match status" value="1"/>
</dbReference>
<dbReference type="HAMAP" id="MF_01366">
    <property type="entry name" value="Ribosomal_uL13"/>
    <property type="match status" value="1"/>
</dbReference>
<dbReference type="InterPro" id="IPR005822">
    <property type="entry name" value="Ribosomal_uL13"/>
</dbReference>
<dbReference type="InterPro" id="IPR005823">
    <property type="entry name" value="Ribosomal_uL13_bac-type"/>
</dbReference>
<dbReference type="InterPro" id="IPR023563">
    <property type="entry name" value="Ribosomal_uL13_CS"/>
</dbReference>
<dbReference type="InterPro" id="IPR036899">
    <property type="entry name" value="Ribosomal_uL13_sf"/>
</dbReference>
<dbReference type="NCBIfam" id="TIGR01066">
    <property type="entry name" value="rplM_bact"/>
    <property type="match status" value="1"/>
</dbReference>
<dbReference type="PANTHER" id="PTHR11545:SF2">
    <property type="entry name" value="LARGE RIBOSOMAL SUBUNIT PROTEIN UL13M"/>
    <property type="match status" value="1"/>
</dbReference>
<dbReference type="PANTHER" id="PTHR11545">
    <property type="entry name" value="RIBOSOMAL PROTEIN L13"/>
    <property type="match status" value="1"/>
</dbReference>
<dbReference type="Pfam" id="PF00572">
    <property type="entry name" value="Ribosomal_L13"/>
    <property type="match status" value="1"/>
</dbReference>
<dbReference type="PIRSF" id="PIRSF002181">
    <property type="entry name" value="Ribosomal_L13"/>
    <property type="match status" value="1"/>
</dbReference>
<dbReference type="SUPFAM" id="SSF52161">
    <property type="entry name" value="Ribosomal protein L13"/>
    <property type="match status" value="1"/>
</dbReference>
<dbReference type="PROSITE" id="PS00783">
    <property type="entry name" value="RIBOSOMAL_L13"/>
    <property type="match status" value="1"/>
</dbReference>
<accession>B7ICN0</accession>
<proteinExistence type="inferred from homology"/>
<reference key="1">
    <citation type="journal article" date="2009" name="J. Bacteriol.">
        <title>The genome of Thermosipho africanus TCF52B: lateral genetic connections to the Firmicutes and Archaea.</title>
        <authorList>
            <person name="Nesboe C.L."/>
            <person name="Bapteste E."/>
            <person name="Curtis B."/>
            <person name="Dahle H."/>
            <person name="Lopez P."/>
            <person name="Macleod D."/>
            <person name="Dlutek M."/>
            <person name="Bowman S."/>
            <person name="Zhaxybayeva O."/>
            <person name="Birkeland N.-K."/>
            <person name="Doolittle W.F."/>
        </authorList>
    </citation>
    <scope>NUCLEOTIDE SEQUENCE [LARGE SCALE GENOMIC DNA]</scope>
    <source>
        <strain>TCF52B</strain>
    </source>
</reference>
<name>RL13_THEAB</name>
<feature type="chain" id="PRO_1000144188" description="Large ribosomal subunit protein uL13">
    <location>
        <begin position="1"/>
        <end position="149"/>
    </location>
</feature>
<protein>
    <recommendedName>
        <fullName evidence="1">Large ribosomal subunit protein uL13</fullName>
    </recommendedName>
    <alternativeName>
        <fullName evidence="2">50S ribosomal protein L13</fullName>
    </alternativeName>
</protein>